<protein>
    <recommendedName>
        <fullName>Pre-mRNA-processing factor 39</fullName>
    </recommendedName>
</protein>
<keyword id="KW-0002">3D-structure</keyword>
<keyword id="KW-0903">Direct protein sequencing</keyword>
<keyword id="KW-0507">mRNA processing</keyword>
<keyword id="KW-0508">mRNA splicing</keyword>
<keyword id="KW-0539">Nucleus</keyword>
<keyword id="KW-1185">Reference proteome</keyword>
<keyword id="KW-0677">Repeat</keyword>
<comment type="function">
    <text>Function prior to stable branch point recognition by the U1 snRNP particle to facilitate or stabilize the U1 snRNP/5'-splice site interaction. Has a direct role in the assembly or function of a catalytically active spliceosome.</text>
</comment>
<comment type="subcellular location">
    <subcellularLocation>
        <location>Nucleus</location>
    </subcellularLocation>
</comment>
<comment type="miscellaneous">
    <text evidence="1">Present with 4460 molecules/cell in log phase SD medium.</text>
</comment>
<comment type="similarity">
    <text evidence="2">Belongs to the PRP39 family.</text>
</comment>
<evidence type="ECO:0000269" key="1">
    <source>
    </source>
</evidence>
<evidence type="ECO:0000305" key="2"/>
<evidence type="ECO:0007829" key="3">
    <source>
        <dbReference type="PDB" id="5ZWN"/>
    </source>
</evidence>
<evidence type="ECO:0007829" key="4">
    <source>
        <dbReference type="PDB" id="6N7R"/>
    </source>
</evidence>
<evidence type="ECO:0007829" key="5">
    <source>
        <dbReference type="PDB" id="8W2O"/>
    </source>
</evidence>
<sequence>MPDETNFTIEDIEPRPDALRGLDTQFLQDNTALVQAYRGLDWSDISSLTQMVDVIEQTVVKYGNPNDSIKLALETILWQILRKYPLLFGFWKRFATIEYQLFGLKKSIAVLATSVKWFPTSLELWCDYLNVLCVNNPNETDFIRNNFEIAKDLIGKQFLSHPFWDKFIEFEVGQKNWHNVQRIYEYIIEVPLHQYARFFTSYKKFLNEKNLKTTRNIDIVLRKTQTTVNEIWQFESKIKQPFFNLGQVLNDDLENWSRYLKFVTDPSKSLDKEFVMSVFDRCLIPCLYHENTWMMYIKWLTKKNISDEVVVDIYQKANTFLPLDFKTLRYDFLRFLKRKYRSNNTLFNNIFNETVSRYLKIWPNDILLMTEYLCMLKRHSFKNSLDQSPKEILEKQTSFTKILETSITNYINNQIDAKVHLQTLINDKNLSIVVVELIKTTWLVLKNNMQTRKYFNLYQKNILIKNSVPFWLTYYKFEKSNVNFTKLNKFIRELGVEIYLPTTVMNDILTDYKTFYLTHSNIVTYESSIIDSNTFDPILYPELKMSNPKYDPVLNTTANVDWHKKTEWKEAGHIGITTERPQISNSIIECNSGTLIQKPISLPNFRNLEKINQVKINDLYTEEFLKEGK</sequence>
<dbReference type="EMBL" id="L29224">
    <property type="protein sequence ID" value="AAA20131.1"/>
    <property type="molecule type" value="Genomic_DNA"/>
</dbReference>
<dbReference type="EMBL" id="Z47816">
    <property type="protein sequence ID" value="CAA87828.1"/>
    <property type="molecule type" value="Genomic_DNA"/>
</dbReference>
<dbReference type="EMBL" id="AY692912">
    <property type="protein sequence ID" value="AAT92931.1"/>
    <property type="molecule type" value="Genomic_DNA"/>
</dbReference>
<dbReference type="EMBL" id="BK006946">
    <property type="protein sequence ID" value="DAA09853.1"/>
    <property type="molecule type" value="Genomic_DNA"/>
</dbReference>
<dbReference type="PIR" id="S47920">
    <property type="entry name" value="S47920"/>
</dbReference>
<dbReference type="RefSeq" id="NP_013667.1">
    <property type="nucleotide sequence ID" value="NM_001182403.1"/>
</dbReference>
<dbReference type="PDB" id="5ZWN">
    <property type="method" value="EM"/>
    <property type="resolution" value="3.30 A"/>
    <property type="chains" value="U=1-629"/>
</dbReference>
<dbReference type="PDB" id="6G90">
    <property type="method" value="EM"/>
    <property type="resolution" value="4.00 A"/>
    <property type="chains" value="D=1-629"/>
</dbReference>
<dbReference type="PDB" id="6N7P">
    <property type="method" value="EM"/>
    <property type="resolution" value="3.60 A"/>
    <property type="chains" value="E=1-629"/>
</dbReference>
<dbReference type="PDB" id="6N7R">
    <property type="method" value="EM"/>
    <property type="resolution" value="3.20 A"/>
    <property type="chains" value="E=1-629"/>
</dbReference>
<dbReference type="PDB" id="6N7X">
    <property type="method" value="EM"/>
    <property type="resolution" value="3.60 A"/>
    <property type="chains" value="E=1-629"/>
</dbReference>
<dbReference type="PDB" id="7OQC">
    <property type="method" value="EM"/>
    <property type="resolution" value="4.10 A"/>
    <property type="chains" value="D=1-629"/>
</dbReference>
<dbReference type="PDB" id="7OQE">
    <property type="method" value="EM"/>
    <property type="resolution" value="5.90 A"/>
    <property type="chains" value="D=1-629"/>
</dbReference>
<dbReference type="PDB" id="8W2O">
    <property type="method" value="EM"/>
    <property type="resolution" value="3.49 A"/>
    <property type="chains" value="E=1-629"/>
</dbReference>
<dbReference type="PDBsum" id="5ZWN"/>
<dbReference type="PDBsum" id="6G90"/>
<dbReference type="PDBsum" id="6N7P"/>
<dbReference type="PDBsum" id="6N7R"/>
<dbReference type="PDBsum" id="6N7X"/>
<dbReference type="PDBsum" id="7OQC"/>
<dbReference type="PDBsum" id="7OQE"/>
<dbReference type="PDBsum" id="8W2O"/>
<dbReference type="EMDB" id="EMD-0360"/>
<dbReference type="EMDB" id="EMD-0361"/>
<dbReference type="EMDB" id="EMD-13029"/>
<dbReference type="EMDB" id="EMD-13033"/>
<dbReference type="EMDB" id="EMD-4364"/>
<dbReference type="EMDB" id="EMD-43753"/>
<dbReference type="EMDB" id="EMD-6973"/>
<dbReference type="EMDB" id="EMD-8622"/>
<dbReference type="SMR" id="P39682"/>
<dbReference type="BioGRID" id="35122">
    <property type="interactions" value="142"/>
</dbReference>
<dbReference type="ComplexPortal" id="CPX-23">
    <property type="entry name" value="U1 small nuclear ribonucleoprotein complex"/>
</dbReference>
<dbReference type="DIP" id="DIP-812N"/>
<dbReference type="FunCoup" id="P39682">
    <property type="interactions" value="242"/>
</dbReference>
<dbReference type="IntAct" id="P39682">
    <property type="interactions" value="23"/>
</dbReference>
<dbReference type="MINT" id="P39682"/>
<dbReference type="STRING" id="4932.YML046W"/>
<dbReference type="iPTMnet" id="P39682"/>
<dbReference type="PaxDb" id="4932-YML046W"/>
<dbReference type="PeptideAtlas" id="P39682"/>
<dbReference type="EnsemblFungi" id="YML046W_mRNA">
    <property type="protein sequence ID" value="YML046W"/>
    <property type="gene ID" value="YML046W"/>
</dbReference>
<dbReference type="GeneID" id="854960"/>
<dbReference type="KEGG" id="sce:YML046W"/>
<dbReference type="AGR" id="SGD:S000004509"/>
<dbReference type="SGD" id="S000004509">
    <property type="gene designation" value="PRP39"/>
</dbReference>
<dbReference type="VEuPathDB" id="FungiDB:YML046W"/>
<dbReference type="eggNOG" id="KOG1258">
    <property type="taxonomic scope" value="Eukaryota"/>
</dbReference>
<dbReference type="GeneTree" id="ENSGT00940000168631"/>
<dbReference type="HOGENOM" id="CLU_024449_0_0_1"/>
<dbReference type="InParanoid" id="P39682"/>
<dbReference type="OMA" id="SLELWCD"/>
<dbReference type="OrthoDB" id="10265668at2759"/>
<dbReference type="BioCyc" id="YEAST:G3O-32643-MONOMER"/>
<dbReference type="BioGRID-ORCS" id="854960">
    <property type="hits" value="3 hits in 10 CRISPR screens"/>
</dbReference>
<dbReference type="PRO" id="PR:P39682"/>
<dbReference type="Proteomes" id="UP000002311">
    <property type="component" value="Chromosome XIII"/>
</dbReference>
<dbReference type="RNAct" id="P39682">
    <property type="molecule type" value="protein"/>
</dbReference>
<dbReference type="GO" id="GO:0000243">
    <property type="term" value="C:commitment complex"/>
    <property type="evidence" value="ECO:0000316"/>
    <property type="project" value="SGD"/>
</dbReference>
<dbReference type="GO" id="GO:0005634">
    <property type="term" value="C:nucleus"/>
    <property type="evidence" value="ECO:0000303"/>
    <property type="project" value="ComplexPortal"/>
</dbReference>
<dbReference type="GO" id="GO:0005681">
    <property type="term" value="C:spliceosomal complex"/>
    <property type="evidence" value="ECO:0000303"/>
    <property type="project" value="ComplexPortal"/>
</dbReference>
<dbReference type="GO" id="GO:0005685">
    <property type="term" value="C:U1 snRNP"/>
    <property type="evidence" value="ECO:0000314"/>
    <property type="project" value="SGD"/>
</dbReference>
<dbReference type="GO" id="GO:0071004">
    <property type="term" value="C:U2-type prespliceosome"/>
    <property type="evidence" value="ECO:0000314"/>
    <property type="project" value="SGD"/>
</dbReference>
<dbReference type="GO" id="GO:0000395">
    <property type="term" value="P:mRNA 5'-splice site recognition"/>
    <property type="evidence" value="ECO:0000316"/>
    <property type="project" value="SGD"/>
</dbReference>
<dbReference type="GO" id="GO:0000398">
    <property type="term" value="P:mRNA splicing, via spliceosome"/>
    <property type="evidence" value="ECO:0000303"/>
    <property type="project" value="ComplexPortal"/>
</dbReference>
<dbReference type="Gene3D" id="1.25.40.10">
    <property type="entry name" value="Tetratricopeptide repeat domain"/>
    <property type="match status" value="1"/>
</dbReference>
<dbReference type="InterPro" id="IPR003107">
    <property type="entry name" value="HAT"/>
</dbReference>
<dbReference type="InterPro" id="IPR011990">
    <property type="entry name" value="TPR-like_helical_dom_sf"/>
</dbReference>
<dbReference type="PANTHER" id="PTHR17204">
    <property type="entry name" value="PRE-MRNA PROCESSING PROTEIN PRP39-RELATED"/>
    <property type="match status" value="1"/>
</dbReference>
<dbReference type="PANTHER" id="PTHR17204:SF5">
    <property type="entry name" value="PRE-MRNA-PROCESSING FACTOR 39"/>
    <property type="match status" value="1"/>
</dbReference>
<dbReference type="Pfam" id="PF23241">
    <property type="entry name" value="HAT_PRP39_C"/>
    <property type="match status" value="1"/>
</dbReference>
<dbReference type="Pfam" id="PF23240">
    <property type="entry name" value="HAT_PRP39_N"/>
    <property type="match status" value="1"/>
</dbReference>
<dbReference type="SMART" id="SM00386">
    <property type="entry name" value="HAT"/>
    <property type="match status" value="4"/>
</dbReference>
<dbReference type="SUPFAM" id="SSF48452">
    <property type="entry name" value="TPR-like"/>
    <property type="match status" value="1"/>
</dbReference>
<proteinExistence type="evidence at protein level"/>
<accession>P39682</accession>
<accession>D6VZC9</accession>
<accession>E9P8Z1</accession>
<feature type="chain" id="PRO_0000205758" description="Pre-mRNA-processing factor 39">
    <location>
        <begin position="1"/>
        <end position="629"/>
    </location>
</feature>
<feature type="repeat" description="HAT 1">
    <location>
        <begin position="68"/>
        <end position="100"/>
    </location>
</feature>
<feature type="repeat" description="HAT 2">
    <location>
        <begin position="102"/>
        <end position="134"/>
    </location>
</feature>
<feature type="repeat" description="HAT 3">
    <location>
        <begin position="138"/>
        <end position="173"/>
    </location>
</feature>
<feature type="repeat" description="HAT 4">
    <location>
        <begin position="175"/>
        <end position="208"/>
    </location>
</feature>
<feature type="repeat" description="HAT 5">
    <location>
        <begin position="233"/>
        <end position="265"/>
    </location>
</feature>
<feature type="repeat" description="HAT 6">
    <location>
        <begin position="270"/>
        <end position="302"/>
    </location>
</feature>
<feature type="repeat" description="HAT 7">
    <location>
        <begin position="446"/>
        <end position="480"/>
    </location>
</feature>
<feature type="sequence conflict" description="In Ref. 4; AAT92931." evidence="2" ref="4">
    <original>K</original>
    <variation>E</variation>
    <location>
        <position position="615"/>
    </location>
</feature>
<feature type="helix" evidence="4">
    <location>
        <begin position="20"/>
        <end position="36"/>
    </location>
</feature>
<feature type="helix" evidence="4">
    <location>
        <begin position="42"/>
        <end position="58"/>
    </location>
</feature>
<feature type="helix" evidence="4">
    <location>
        <begin position="63"/>
        <end position="75"/>
    </location>
</feature>
<feature type="helix" evidence="4">
    <location>
        <begin position="79"/>
        <end position="91"/>
    </location>
</feature>
<feature type="helix" evidence="4">
    <location>
        <begin position="97"/>
        <end position="108"/>
    </location>
</feature>
<feature type="helix" evidence="4">
    <location>
        <begin position="114"/>
        <end position="128"/>
    </location>
</feature>
<feature type="turn" evidence="4">
    <location>
        <begin position="129"/>
        <end position="131"/>
    </location>
</feature>
<feature type="helix" evidence="4">
    <location>
        <begin position="136"/>
        <end position="148"/>
    </location>
</feature>
<feature type="helix" evidence="4">
    <location>
        <begin position="152"/>
        <end position="163"/>
    </location>
</feature>
<feature type="helix" evidence="4">
    <location>
        <begin position="170"/>
        <end position="180"/>
    </location>
</feature>
<feature type="turn" evidence="4">
    <location>
        <begin position="182"/>
        <end position="188"/>
    </location>
</feature>
<feature type="helix" evidence="4">
    <location>
        <begin position="189"/>
        <end position="214"/>
    </location>
</feature>
<feature type="strand" evidence="4">
    <location>
        <begin position="220"/>
        <end position="222"/>
    </location>
</feature>
<feature type="helix" evidence="4">
    <location>
        <begin position="223"/>
        <end position="226"/>
    </location>
</feature>
<feature type="helix" evidence="4">
    <location>
        <begin position="228"/>
        <end position="239"/>
    </location>
</feature>
<feature type="helix" evidence="4">
    <location>
        <begin position="245"/>
        <end position="258"/>
    </location>
</feature>
<feature type="helix" evidence="4">
    <location>
        <begin position="290"/>
        <end position="303"/>
    </location>
</feature>
<feature type="helix" evidence="4">
    <location>
        <begin position="307"/>
        <end position="320"/>
    </location>
</feature>
<feature type="helix" evidence="4">
    <location>
        <begin position="328"/>
        <end position="343"/>
    </location>
</feature>
<feature type="helix" evidence="4">
    <location>
        <begin position="346"/>
        <end position="361"/>
    </location>
</feature>
<feature type="helix" evidence="4">
    <location>
        <begin position="367"/>
        <end position="379"/>
    </location>
</feature>
<feature type="strand" evidence="5">
    <location>
        <begin position="385"/>
        <end position="387"/>
    </location>
</feature>
<feature type="helix" evidence="4">
    <location>
        <begin position="389"/>
        <end position="411"/>
    </location>
</feature>
<feature type="helix" evidence="4">
    <location>
        <begin position="420"/>
        <end position="424"/>
    </location>
</feature>
<feature type="turn" evidence="3">
    <location>
        <begin position="427"/>
        <end position="429"/>
    </location>
</feature>
<feature type="helix" evidence="4">
    <location>
        <begin position="430"/>
        <end position="443"/>
    </location>
</feature>
<feature type="helix" evidence="4">
    <location>
        <begin position="448"/>
        <end position="458"/>
    </location>
</feature>
<feature type="helix" evidence="4">
    <location>
        <begin position="462"/>
        <end position="465"/>
    </location>
</feature>
<feature type="helix" evidence="4">
    <location>
        <begin position="468"/>
        <end position="480"/>
    </location>
</feature>
<feature type="helix" evidence="4">
    <location>
        <begin position="485"/>
        <end position="496"/>
    </location>
</feature>
<feature type="helix" evidence="4">
    <location>
        <begin position="502"/>
        <end position="519"/>
    </location>
</feature>
<feature type="helix" evidence="4">
    <location>
        <begin position="522"/>
        <end position="528"/>
    </location>
</feature>
<feature type="turn" evidence="4">
    <location>
        <begin position="531"/>
        <end position="533"/>
    </location>
</feature>
<feature type="turn" evidence="4">
    <location>
        <begin position="537"/>
        <end position="539"/>
    </location>
</feature>
<feature type="helix" evidence="4">
    <location>
        <begin position="540"/>
        <end position="543"/>
    </location>
</feature>
<feature type="strand" evidence="3">
    <location>
        <begin position="544"/>
        <end position="546"/>
    </location>
</feature>
<feature type="turn" evidence="3">
    <location>
        <begin position="557"/>
        <end position="560"/>
    </location>
</feature>
<feature type="helix" evidence="4">
    <location>
        <begin position="566"/>
        <end position="569"/>
    </location>
</feature>
<feature type="strand" evidence="4">
    <location>
        <begin position="571"/>
        <end position="573"/>
    </location>
</feature>
<feature type="strand" evidence="3">
    <location>
        <begin position="582"/>
        <end position="585"/>
    </location>
</feature>
<feature type="helix" evidence="4">
    <location>
        <begin position="592"/>
        <end position="595"/>
    </location>
</feature>
<feature type="strand" evidence="3">
    <location>
        <begin position="596"/>
        <end position="598"/>
    </location>
</feature>
<feature type="strand" evidence="3">
    <location>
        <begin position="605"/>
        <end position="607"/>
    </location>
</feature>
<feature type="helix" evidence="4">
    <location>
        <begin position="619"/>
        <end position="623"/>
    </location>
</feature>
<reference key="1">
    <citation type="journal article" date="1994" name="Mol. Cell. Biol.">
        <title>Commitment of yeast pre-mRNA to the splicing pathway requires a novel U1 small nuclear ribonucleoprotein polypeptide, Prp39p.</title>
        <authorList>
            <person name="Lockhart S.R."/>
            <person name="Rymond B.C."/>
        </authorList>
    </citation>
    <scope>NUCLEOTIDE SEQUENCE [GENOMIC DNA]</scope>
    <source>
        <strain>S288c / GRF88</strain>
    </source>
</reference>
<reference key="2">
    <citation type="journal article" date="1997" name="Nature">
        <title>The nucleotide sequence of Saccharomyces cerevisiae chromosome XIII.</title>
        <authorList>
            <person name="Bowman S."/>
            <person name="Churcher C.M."/>
            <person name="Badcock K."/>
            <person name="Brown D."/>
            <person name="Chillingworth T."/>
            <person name="Connor R."/>
            <person name="Dedman K."/>
            <person name="Devlin K."/>
            <person name="Gentles S."/>
            <person name="Hamlin N."/>
            <person name="Hunt S."/>
            <person name="Jagels K."/>
            <person name="Lye G."/>
            <person name="Moule S."/>
            <person name="Odell C."/>
            <person name="Pearson D."/>
            <person name="Rajandream M.A."/>
            <person name="Rice P."/>
            <person name="Skelton J."/>
            <person name="Walsh S.V."/>
            <person name="Whitehead S."/>
            <person name="Barrell B.G."/>
        </authorList>
    </citation>
    <scope>NUCLEOTIDE SEQUENCE [LARGE SCALE GENOMIC DNA]</scope>
    <source>
        <strain>ATCC 204508 / S288c</strain>
    </source>
</reference>
<reference key="3">
    <citation type="journal article" date="2014" name="G3 (Bethesda)">
        <title>The reference genome sequence of Saccharomyces cerevisiae: Then and now.</title>
        <authorList>
            <person name="Engel S.R."/>
            <person name="Dietrich F.S."/>
            <person name="Fisk D.G."/>
            <person name="Binkley G."/>
            <person name="Balakrishnan R."/>
            <person name="Costanzo M.C."/>
            <person name="Dwight S.S."/>
            <person name="Hitz B.C."/>
            <person name="Karra K."/>
            <person name="Nash R.S."/>
            <person name="Weng S."/>
            <person name="Wong E.D."/>
            <person name="Lloyd P."/>
            <person name="Skrzypek M.S."/>
            <person name="Miyasato S.R."/>
            <person name="Simison M."/>
            <person name="Cherry J.M."/>
        </authorList>
    </citation>
    <scope>GENOME REANNOTATION</scope>
    <source>
        <strain>ATCC 204508 / S288c</strain>
    </source>
</reference>
<reference key="4">
    <citation type="journal article" date="2007" name="Genome Res.">
        <title>Approaching a complete repository of sequence-verified protein-encoding clones for Saccharomyces cerevisiae.</title>
        <authorList>
            <person name="Hu Y."/>
            <person name="Rolfs A."/>
            <person name="Bhullar B."/>
            <person name="Murthy T.V.S."/>
            <person name="Zhu C."/>
            <person name="Berger M.F."/>
            <person name="Camargo A.A."/>
            <person name="Kelley F."/>
            <person name="McCarron S."/>
            <person name="Jepson D."/>
            <person name="Richardson A."/>
            <person name="Raphael J."/>
            <person name="Moreira D."/>
            <person name="Taycher E."/>
            <person name="Zuo D."/>
            <person name="Mohr S."/>
            <person name="Kane M.F."/>
            <person name="Williamson J."/>
            <person name="Simpson A.J.G."/>
            <person name="Bulyk M.L."/>
            <person name="Harlow E."/>
            <person name="Marsischky G."/>
            <person name="Kolodner R.D."/>
            <person name="LaBaer J."/>
        </authorList>
    </citation>
    <scope>NUCLEOTIDE SEQUENCE [GENOMIC DNA]</scope>
    <source>
        <strain>ATCC 204508 / S288c</strain>
    </source>
</reference>
<reference key="5">
    <citation type="journal article" date="1997" name="Proc. Natl. Acad. Sci. U.S.A.">
        <title>Identification of the proteins of the yeast U1 small nuclear ribonucleoprotein complex by mass spectrometry.</title>
        <authorList>
            <person name="Neubauer G."/>
            <person name="Gottschalk A."/>
            <person name="Fabrizio P."/>
            <person name="Seraphin B."/>
            <person name="Luehrmann R."/>
            <person name="Mann M."/>
        </authorList>
    </citation>
    <scope>PARTIAL PROTEIN SEQUENCE</scope>
</reference>
<reference key="6">
    <citation type="journal article" date="2003" name="Nature">
        <title>Global analysis of protein expression in yeast.</title>
        <authorList>
            <person name="Ghaemmaghami S."/>
            <person name="Huh W.-K."/>
            <person name="Bower K."/>
            <person name="Howson R.W."/>
            <person name="Belle A."/>
            <person name="Dephoure N."/>
            <person name="O'Shea E.K."/>
            <person name="Weissman J.S."/>
        </authorList>
    </citation>
    <scope>LEVEL OF PROTEIN EXPRESSION [LARGE SCALE ANALYSIS]</scope>
</reference>
<organism>
    <name type="scientific">Saccharomyces cerevisiae (strain ATCC 204508 / S288c)</name>
    <name type="common">Baker's yeast</name>
    <dbReference type="NCBI Taxonomy" id="559292"/>
    <lineage>
        <taxon>Eukaryota</taxon>
        <taxon>Fungi</taxon>
        <taxon>Dikarya</taxon>
        <taxon>Ascomycota</taxon>
        <taxon>Saccharomycotina</taxon>
        <taxon>Saccharomycetes</taxon>
        <taxon>Saccharomycetales</taxon>
        <taxon>Saccharomycetaceae</taxon>
        <taxon>Saccharomyces</taxon>
    </lineage>
</organism>
<name>PRP39_YEAST</name>
<gene>
    <name type="primary">PRP39</name>
    <name type="ordered locus">YML046W</name>
    <name type="ORF">YM9827.06</name>
</gene>